<sequence>MLFARRLEQLKDLNRIRNFSIIAHIDHGKSTLADRFIQICGGLTEREMSSQVLDSMDIERERGITIKAQCVSLNYTAKDGKTYLLNFIDTPGHVDFSYEVSRSLAACEGAILVVDAAQGVEAQTLAVCYTAIDQSLTVLPVLNKIDLPQAEPERVISEIEDIIGLDAQDAIRVSAKSGLGVNDVLEALVANIPPPKGDVHAPLQALIIDSWFDSYLGVVSLVRIVNGAIRKGDKMRVMSTGRAYEVDQVGIFTPKRTKLDALYAGEVGYVVAGIKEIQGAPVGDTLTLDRNPADKVLPGFQRVKPQVYAGLFPVSSDDFEAFREALAKLSLNDASLFYEPESSEALGFGFRCGFLGMLHMEIIQERLEREYNLDLISTAPTVVYQIVTQKGETLLIDNPSHLPPTPQIKEMYEPIVRANILVPQDYLGPIITLCVERRGVQVSMTYSGRHVSVVYDIPMSEVVSDFFDRLKSVSRGYASLDYNFQRFQIADLVKMDILINSERVDALAVIVHRDSAHSRGKLIAEKMQQLIPRQMFDVAIQAAIGSHIIARQTVKALRKNVTAKCYGGDVTRKRKLLEKQKAGKKRMKQVGHVEIPQEAFMAVFQTDKKK</sequence>
<evidence type="ECO:0000255" key="1">
    <source>
        <dbReference type="HAMAP-Rule" id="MF_00071"/>
    </source>
</evidence>
<feature type="chain" id="PRO_1000032014" description="Elongation factor 4">
    <location>
        <begin position="1"/>
        <end position="610"/>
    </location>
</feature>
<feature type="domain" description="tr-type G">
    <location>
        <begin position="14"/>
        <end position="196"/>
    </location>
</feature>
<feature type="binding site" evidence="1">
    <location>
        <begin position="26"/>
        <end position="31"/>
    </location>
    <ligand>
        <name>GTP</name>
        <dbReference type="ChEBI" id="CHEBI:37565"/>
    </ligand>
</feature>
<feature type="binding site" evidence="1">
    <location>
        <begin position="143"/>
        <end position="146"/>
    </location>
    <ligand>
        <name>GTP</name>
        <dbReference type="ChEBI" id="CHEBI:37565"/>
    </ligand>
</feature>
<gene>
    <name evidence="1" type="primary">lepA</name>
    <name type="ordered locus">LPC_1317</name>
</gene>
<name>LEPA_LEGPC</name>
<comment type="function">
    <text evidence="1">Required for accurate and efficient protein synthesis under certain stress conditions. May act as a fidelity factor of the translation reaction, by catalyzing a one-codon backward translocation of tRNAs on improperly translocated ribosomes. Back-translocation proceeds from a post-translocation (POST) complex to a pre-translocation (PRE) complex, thus giving elongation factor G a second chance to translocate the tRNAs correctly. Binds to ribosomes in a GTP-dependent manner.</text>
</comment>
<comment type="catalytic activity">
    <reaction evidence="1">
        <text>GTP + H2O = GDP + phosphate + H(+)</text>
        <dbReference type="Rhea" id="RHEA:19669"/>
        <dbReference type="ChEBI" id="CHEBI:15377"/>
        <dbReference type="ChEBI" id="CHEBI:15378"/>
        <dbReference type="ChEBI" id="CHEBI:37565"/>
        <dbReference type="ChEBI" id="CHEBI:43474"/>
        <dbReference type="ChEBI" id="CHEBI:58189"/>
        <dbReference type="EC" id="3.6.5.n1"/>
    </reaction>
</comment>
<comment type="subcellular location">
    <subcellularLocation>
        <location evidence="1">Cell inner membrane</location>
        <topology evidence="1">Peripheral membrane protein</topology>
        <orientation evidence="1">Cytoplasmic side</orientation>
    </subcellularLocation>
</comment>
<comment type="similarity">
    <text evidence="1">Belongs to the TRAFAC class translation factor GTPase superfamily. Classic translation factor GTPase family. LepA subfamily.</text>
</comment>
<reference key="1">
    <citation type="submission" date="2006-11" db="EMBL/GenBank/DDBJ databases">
        <title>Identification and characterization of a new conjugation/ type IVA secretion system (trb/tra) of L. pneumophila Corby localized on a mobile genomic island.</title>
        <authorList>
            <person name="Gloeckner G."/>
            <person name="Albert-Weissenberger C."/>
            <person name="Weinmann E."/>
            <person name="Jacobi S."/>
            <person name="Schunder E."/>
            <person name="Steinert M."/>
            <person name="Buchrieser C."/>
            <person name="Hacker J."/>
            <person name="Heuner K."/>
        </authorList>
    </citation>
    <scope>NUCLEOTIDE SEQUENCE [LARGE SCALE GENOMIC DNA]</scope>
    <source>
        <strain>Corby</strain>
    </source>
</reference>
<dbReference type="EC" id="3.6.5.n1" evidence="1"/>
<dbReference type="EMBL" id="CP000675">
    <property type="protein sequence ID" value="ABQ55274.1"/>
    <property type="molecule type" value="Genomic_DNA"/>
</dbReference>
<dbReference type="RefSeq" id="WP_010947592.1">
    <property type="nucleotide sequence ID" value="NZ_JAPMSS010000005.1"/>
</dbReference>
<dbReference type="SMR" id="A5ID24"/>
<dbReference type="GeneID" id="57035864"/>
<dbReference type="KEGG" id="lpc:LPC_1317"/>
<dbReference type="HOGENOM" id="CLU_009995_3_3_6"/>
<dbReference type="GO" id="GO:0005886">
    <property type="term" value="C:plasma membrane"/>
    <property type="evidence" value="ECO:0007669"/>
    <property type="project" value="UniProtKB-SubCell"/>
</dbReference>
<dbReference type="GO" id="GO:0005525">
    <property type="term" value="F:GTP binding"/>
    <property type="evidence" value="ECO:0007669"/>
    <property type="project" value="UniProtKB-UniRule"/>
</dbReference>
<dbReference type="GO" id="GO:0003924">
    <property type="term" value="F:GTPase activity"/>
    <property type="evidence" value="ECO:0007669"/>
    <property type="project" value="UniProtKB-UniRule"/>
</dbReference>
<dbReference type="GO" id="GO:0097216">
    <property type="term" value="F:guanosine tetraphosphate binding"/>
    <property type="evidence" value="ECO:0007669"/>
    <property type="project" value="UniProtKB-ARBA"/>
</dbReference>
<dbReference type="GO" id="GO:0043022">
    <property type="term" value="F:ribosome binding"/>
    <property type="evidence" value="ECO:0007669"/>
    <property type="project" value="UniProtKB-UniRule"/>
</dbReference>
<dbReference type="GO" id="GO:0003746">
    <property type="term" value="F:translation elongation factor activity"/>
    <property type="evidence" value="ECO:0007669"/>
    <property type="project" value="UniProtKB-UniRule"/>
</dbReference>
<dbReference type="GO" id="GO:0045727">
    <property type="term" value="P:positive regulation of translation"/>
    <property type="evidence" value="ECO:0007669"/>
    <property type="project" value="UniProtKB-UniRule"/>
</dbReference>
<dbReference type="CDD" id="cd03699">
    <property type="entry name" value="EF4_II"/>
    <property type="match status" value="1"/>
</dbReference>
<dbReference type="CDD" id="cd16260">
    <property type="entry name" value="EF4_III"/>
    <property type="match status" value="1"/>
</dbReference>
<dbReference type="CDD" id="cd01890">
    <property type="entry name" value="LepA"/>
    <property type="match status" value="1"/>
</dbReference>
<dbReference type="CDD" id="cd03709">
    <property type="entry name" value="lepA_C"/>
    <property type="match status" value="1"/>
</dbReference>
<dbReference type="FunFam" id="3.40.50.300:FF:000078">
    <property type="entry name" value="Elongation factor 4"/>
    <property type="match status" value="1"/>
</dbReference>
<dbReference type="FunFam" id="2.40.30.10:FF:000015">
    <property type="entry name" value="Translation factor GUF1, mitochondrial"/>
    <property type="match status" value="1"/>
</dbReference>
<dbReference type="FunFam" id="3.30.70.240:FF:000007">
    <property type="entry name" value="Translation factor GUF1, mitochondrial"/>
    <property type="match status" value="1"/>
</dbReference>
<dbReference type="FunFam" id="3.30.70.2570:FF:000001">
    <property type="entry name" value="Translation factor GUF1, mitochondrial"/>
    <property type="match status" value="1"/>
</dbReference>
<dbReference type="FunFam" id="3.30.70.870:FF:000004">
    <property type="entry name" value="Translation factor GUF1, mitochondrial"/>
    <property type="match status" value="1"/>
</dbReference>
<dbReference type="Gene3D" id="3.30.70.240">
    <property type="match status" value="1"/>
</dbReference>
<dbReference type="Gene3D" id="3.30.70.2570">
    <property type="entry name" value="Elongation factor 4, C-terminal domain"/>
    <property type="match status" value="1"/>
</dbReference>
<dbReference type="Gene3D" id="3.30.70.870">
    <property type="entry name" value="Elongation Factor G (Translational Gtpase), domain 3"/>
    <property type="match status" value="1"/>
</dbReference>
<dbReference type="Gene3D" id="3.40.50.300">
    <property type="entry name" value="P-loop containing nucleotide triphosphate hydrolases"/>
    <property type="match status" value="1"/>
</dbReference>
<dbReference type="Gene3D" id="2.40.30.10">
    <property type="entry name" value="Translation factors"/>
    <property type="match status" value="1"/>
</dbReference>
<dbReference type="HAMAP" id="MF_00071">
    <property type="entry name" value="LepA"/>
    <property type="match status" value="1"/>
</dbReference>
<dbReference type="InterPro" id="IPR006297">
    <property type="entry name" value="EF-4"/>
</dbReference>
<dbReference type="InterPro" id="IPR035647">
    <property type="entry name" value="EFG_III/V"/>
</dbReference>
<dbReference type="InterPro" id="IPR000640">
    <property type="entry name" value="EFG_V-like"/>
</dbReference>
<dbReference type="InterPro" id="IPR004161">
    <property type="entry name" value="EFTu-like_2"/>
</dbReference>
<dbReference type="InterPro" id="IPR031157">
    <property type="entry name" value="G_TR_CS"/>
</dbReference>
<dbReference type="InterPro" id="IPR038363">
    <property type="entry name" value="LepA_C_sf"/>
</dbReference>
<dbReference type="InterPro" id="IPR013842">
    <property type="entry name" value="LepA_CTD"/>
</dbReference>
<dbReference type="InterPro" id="IPR035654">
    <property type="entry name" value="LepA_IV"/>
</dbReference>
<dbReference type="InterPro" id="IPR027417">
    <property type="entry name" value="P-loop_NTPase"/>
</dbReference>
<dbReference type="InterPro" id="IPR005225">
    <property type="entry name" value="Small_GTP-bd"/>
</dbReference>
<dbReference type="InterPro" id="IPR000795">
    <property type="entry name" value="T_Tr_GTP-bd_dom"/>
</dbReference>
<dbReference type="NCBIfam" id="TIGR01393">
    <property type="entry name" value="lepA"/>
    <property type="match status" value="1"/>
</dbReference>
<dbReference type="NCBIfam" id="TIGR00231">
    <property type="entry name" value="small_GTP"/>
    <property type="match status" value="1"/>
</dbReference>
<dbReference type="PANTHER" id="PTHR43512:SF4">
    <property type="entry name" value="TRANSLATION FACTOR GUF1 HOMOLOG, CHLOROPLASTIC"/>
    <property type="match status" value="1"/>
</dbReference>
<dbReference type="PANTHER" id="PTHR43512">
    <property type="entry name" value="TRANSLATION FACTOR GUF1-RELATED"/>
    <property type="match status" value="1"/>
</dbReference>
<dbReference type="Pfam" id="PF00679">
    <property type="entry name" value="EFG_C"/>
    <property type="match status" value="1"/>
</dbReference>
<dbReference type="Pfam" id="PF00009">
    <property type="entry name" value="GTP_EFTU"/>
    <property type="match status" value="1"/>
</dbReference>
<dbReference type="Pfam" id="PF03144">
    <property type="entry name" value="GTP_EFTU_D2"/>
    <property type="match status" value="1"/>
</dbReference>
<dbReference type="Pfam" id="PF06421">
    <property type="entry name" value="LepA_C"/>
    <property type="match status" value="1"/>
</dbReference>
<dbReference type="PRINTS" id="PR00315">
    <property type="entry name" value="ELONGATNFCT"/>
</dbReference>
<dbReference type="SMART" id="SM00838">
    <property type="entry name" value="EFG_C"/>
    <property type="match status" value="1"/>
</dbReference>
<dbReference type="SUPFAM" id="SSF54980">
    <property type="entry name" value="EF-G C-terminal domain-like"/>
    <property type="match status" value="2"/>
</dbReference>
<dbReference type="SUPFAM" id="SSF52540">
    <property type="entry name" value="P-loop containing nucleoside triphosphate hydrolases"/>
    <property type="match status" value="1"/>
</dbReference>
<dbReference type="PROSITE" id="PS00301">
    <property type="entry name" value="G_TR_1"/>
    <property type="match status" value="1"/>
</dbReference>
<dbReference type="PROSITE" id="PS51722">
    <property type="entry name" value="G_TR_2"/>
    <property type="match status" value="1"/>
</dbReference>
<keyword id="KW-0997">Cell inner membrane</keyword>
<keyword id="KW-1003">Cell membrane</keyword>
<keyword id="KW-0342">GTP-binding</keyword>
<keyword id="KW-0378">Hydrolase</keyword>
<keyword id="KW-0472">Membrane</keyword>
<keyword id="KW-0547">Nucleotide-binding</keyword>
<keyword id="KW-0648">Protein biosynthesis</keyword>
<organism>
    <name type="scientific">Legionella pneumophila (strain Corby)</name>
    <dbReference type="NCBI Taxonomy" id="400673"/>
    <lineage>
        <taxon>Bacteria</taxon>
        <taxon>Pseudomonadati</taxon>
        <taxon>Pseudomonadota</taxon>
        <taxon>Gammaproteobacteria</taxon>
        <taxon>Legionellales</taxon>
        <taxon>Legionellaceae</taxon>
        <taxon>Legionella</taxon>
    </lineage>
</organism>
<proteinExistence type="inferred from homology"/>
<protein>
    <recommendedName>
        <fullName evidence="1">Elongation factor 4</fullName>
        <shortName evidence="1">EF-4</shortName>
        <ecNumber evidence="1">3.6.5.n1</ecNumber>
    </recommendedName>
    <alternativeName>
        <fullName evidence="1">Ribosomal back-translocase LepA</fullName>
    </alternativeName>
</protein>
<accession>A5ID24</accession>